<gene>
    <name type="primary">Tmem117</name>
</gene>
<keyword id="KW-1003">Cell membrane</keyword>
<keyword id="KW-0325">Glycoprotein</keyword>
<keyword id="KW-0472">Membrane</keyword>
<keyword id="KW-0597">Phosphoprotein</keyword>
<keyword id="KW-1185">Reference proteome</keyword>
<keyword id="KW-0812">Transmembrane</keyword>
<keyword id="KW-1133">Transmembrane helix</keyword>
<feature type="chain" id="PRO_0000251205" description="Transmembrane protein 117">
    <location>
        <begin position="1"/>
        <end position="514"/>
    </location>
</feature>
<feature type="topological domain" description="Cytoplasmic" evidence="1">
    <location>
        <begin position="1"/>
        <end position="15"/>
    </location>
</feature>
<feature type="transmembrane region" description="Helical" evidence="2">
    <location>
        <begin position="16"/>
        <end position="36"/>
    </location>
</feature>
<feature type="topological domain" description="Extracellular" evidence="1">
    <location>
        <begin position="37"/>
        <end position="65"/>
    </location>
</feature>
<feature type="transmembrane region" description="Helical" evidence="2">
    <location>
        <begin position="66"/>
        <end position="86"/>
    </location>
</feature>
<feature type="topological domain" description="Cytoplasmic" evidence="1">
    <location>
        <begin position="87"/>
        <end position="110"/>
    </location>
</feature>
<feature type="transmembrane region" description="Helical" evidence="2">
    <location>
        <begin position="111"/>
        <end position="131"/>
    </location>
</feature>
<feature type="topological domain" description="Extracellular" evidence="1">
    <location>
        <begin position="132"/>
        <end position="154"/>
    </location>
</feature>
<feature type="transmembrane region" description="Helical" evidence="2">
    <location>
        <begin position="155"/>
        <end position="175"/>
    </location>
</feature>
<feature type="topological domain" description="Cytoplasmic" evidence="1">
    <location>
        <begin position="176"/>
        <end position="198"/>
    </location>
</feature>
<feature type="transmembrane region" description="Helical" evidence="2">
    <location>
        <begin position="199"/>
        <end position="219"/>
    </location>
</feature>
<feature type="topological domain" description="Extracellular" evidence="1">
    <location>
        <begin position="220"/>
        <end position="239"/>
    </location>
</feature>
<feature type="transmembrane region" description="Helical" evidence="2">
    <location>
        <begin position="240"/>
        <end position="260"/>
    </location>
</feature>
<feature type="topological domain" description="Cytoplasmic" evidence="1">
    <location>
        <begin position="261"/>
        <end position="295"/>
    </location>
</feature>
<feature type="transmembrane region" description="Helical" evidence="2">
    <location>
        <begin position="296"/>
        <end position="316"/>
    </location>
</feature>
<feature type="topological domain" description="Extracellular" evidence="1">
    <location>
        <begin position="317"/>
        <end position="394"/>
    </location>
</feature>
<feature type="transmembrane region" description="Helical" evidence="2">
    <location>
        <begin position="395"/>
        <end position="415"/>
    </location>
</feature>
<feature type="topological domain" description="Cytoplasmic" evidence="1">
    <location>
        <begin position="416"/>
        <end position="514"/>
    </location>
</feature>
<feature type="region of interest" description="Disordered" evidence="3">
    <location>
        <begin position="430"/>
        <end position="450"/>
    </location>
</feature>
<feature type="region of interest" description="Disordered" evidence="3">
    <location>
        <begin position="494"/>
        <end position="514"/>
    </location>
</feature>
<feature type="compositionally biased region" description="Basic and acidic residues" evidence="3">
    <location>
        <begin position="438"/>
        <end position="448"/>
    </location>
</feature>
<feature type="modified residue" description="Phosphothreonine" evidence="5">
    <location>
        <position position="453"/>
    </location>
</feature>
<feature type="glycosylation site" description="N-linked (GlcNAc...) asparagine" evidence="1">
    <location>
        <position position="353"/>
    </location>
</feature>
<feature type="glycosylation site" description="N-linked (GlcNAc...) asparagine" evidence="1">
    <location>
        <position position="371"/>
    </location>
</feature>
<reference key="1">
    <citation type="journal article" date="2005" name="Science">
        <title>The transcriptional landscape of the mammalian genome.</title>
        <authorList>
            <person name="Carninci P."/>
            <person name="Kasukawa T."/>
            <person name="Katayama S."/>
            <person name="Gough J."/>
            <person name="Frith M.C."/>
            <person name="Maeda N."/>
            <person name="Oyama R."/>
            <person name="Ravasi T."/>
            <person name="Lenhard B."/>
            <person name="Wells C."/>
            <person name="Kodzius R."/>
            <person name="Shimokawa K."/>
            <person name="Bajic V.B."/>
            <person name="Brenner S.E."/>
            <person name="Batalov S."/>
            <person name="Forrest A.R."/>
            <person name="Zavolan M."/>
            <person name="Davis M.J."/>
            <person name="Wilming L.G."/>
            <person name="Aidinis V."/>
            <person name="Allen J.E."/>
            <person name="Ambesi-Impiombato A."/>
            <person name="Apweiler R."/>
            <person name="Aturaliya R.N."/>
            <person name="Bailey T.L."/>
            <person name="Bansal M."/>
            <person name="Baxter L."/>
            <person name="Beisel K.W."/>
            <person name="Bersano T."/>
            <person name="Bono H."/>
            <person name="Chalk A.M."/>
            <person name="Chiu K.P."/>
            <person name="Choudhary V."/>
            <person name="Christoffels A."/>
            <person name="Clutterbuck D.R."/>
            <person name="Crowe M.L."/>
            <person name="Dalla E."/>
            <person name="Dalrymple B.P."/>
            <person name="de Bono B."/>
            <person name="Della Gatta G."/>
            <person name="di Bernardo D."/>
            <person name="Down T."/>
            <person name="Engstrom P."/>
            <person name="Fagiolini M."/>
            <person name="Faulkner G."/>
            <person name="Fletcher C.F."/>
            <person name="Fukushima T."/>
            <person name="Furuno M."/>
            <person name="Futaki S."/>
            <person name="Gariboldi M."/>
            <person name="Georgii-Hemming P."/>
            <person name="Gingeras T.R."/>
            <person name="Gojobori T."/>
            <person name="Green R.E."/>
            <person name="Gustincich S."/>
            <person name="Harbers M."/>
            <person name="Hayashi Y."/>
            <person name="Hensch T.K."/>
            <person name="Hirokawa N."/>
            <person name="Hill D."/>
            <person name="Huminiecki L."/>
            <person name="Iacono M."/>
            <person name="Ikeo K."/>
            <person name="Iwama A."/>
            <person name="Ishikawa T."/>
            <person name="Jakt M."/>
            <person name="Kanapin A."/>
            <person name="Katoh M."/>
            <person name="Kawasawa Y."/>
            <person name="Kelso J."/>
            <person name="Kitamura H."/>
            <person name="Kitano H."/>
            <person name="Kollias G."/>
            <person name="Krishnan S.P."/>
            <person name="Kruger A."/>
            <person name="Kummerfeld S.K."/>
            <person name="Kurochkin I.V."/>
            <person name="Lareau L.F."/>
            <person name="Lazarevic D."/>
            <person name="Lipovich L."/>
            <person name="Liu J."/>
            <person name="Liuni S."/>
            <person name="McWilliam S."/>
            <person name="Madan Babu M."/>
            <person name="Madera M."/>
            <person name="Marchionni L."/>
            <person name="Matsuda H."/>
            <person name="Matsuzawa S."/>
            <person name="Miki H."/>
            <person name="Mignone F."/>
            <person name="Miyake S."/>
            <person name="Morris K."/>
            <person name="Mottagui-Tabar S."/>
            <person name="Mulder N."/>
            <person name="Nakano N."/>
            <person name="Nakauchi H."/>
            <person name="Ng P."/>
            <person name="Nilsson R."/>
            <person name="Nishiguchi S."/>
            <person name="Nishikawa S."/>
            <person name="Nori F."/>
            <person name="Ohara O."/>
            <person name="Okazaki Y."/>
            <person name="Orlando V."/>
            <person name="Pang K.C."/>
            <person name="Pavan W.J."/>
            <person name="Pavesi G."/>
            <person name="Pesole G."/>
            <person name="Petrovsky N."/>
            <person name="Piazza S."/>
            <person name="Reed J."/>
            <person name="Reid J.F."/>
            <person name="Ring B.Z."/>
            <person name="Ringwald M."/>
            <person name="Rost B."/>
            <person name="Ruan Y."/>
            <person name="Salzberg S.L."/>
            <person name="Sandelin A."/>
            <person name="Schneider C."/>
            <person name="Schoenbach C."/>
            <person name="Sekiguchi K."/>
            <person name="Semple C.A."/>
            <person name="Seno S."/>
            <person name="Sessa L."/>
            <person name="Sheng Y."/>
            <person name="Shibata Y."/>
            <person name="Shimada H."/>
            <person name="Shimada K."/>
            <person name="Silva D."/>
            <person name="Sinclair B."/>
            <person name="Sperling S."/>
            <person name="Stupka E."/>
            <person name="Sugiura K."/>
            <person name="Sultana R."/>
            <person name="Takenaka Y."/>
            <person name="Taki K."/>
            <person name="Tammoja K."/>
            <person name="Tan S.L."/>
            <person name="Tang S."/>
            <person name="Taylor M.S."/>
            <person name="Tegner J."/>
            <person name="Teichmann S.A."/>
            <person name="Ueda H.R."/>
            <person name="van Nimwegen E."/>
            <person name="Verardo R."/>
            <person name="Wei C.L."/>
            <person name="Yagi K."/>
            <person name="Yamanishi H."/>
            <person name="Zabarovsky E."/>
            <person name="Zhu S."/>
            <person name="Zimmer A."/>
            <person name="Hide W."/>
            <person name="Bult C."/>
            <person name="Grimmond S.M."/>
            <person name="Teasdale R.D."/>
            <person name="Liu E.T."/>
            <person name="Brusic V."/>
            <person name="Quackenbush J."/>
            <person name="Wahlestedt C."/>
            <person name="Mattick J.S."/>
            <person name="Hume D.A."/>
            <person name="Kai C."/>
            <person name="Sasaki D."/>
            <person name="Tomaru Y."/>
            <person name="Fukuda S."/>
            <person name="Kanamori-Katayama M."/>
            <person name="Suzuki M."/>
            <person name="Aoki J."/>
            <person name="Arakawa T."/>
            <person name="Iida J."/>
            <person name="Imamura K."/>
            <person name="Itoh M."/>
            <person name="Kato T."/>
            <person name="Kawaji H."/>
            <person name="Kawagashira N."/>
            <person name="Kawashima T."/>
            <person name="Kojima M."/>
            <person name="Kondo S."/>
            <person name="Konno H."/>
            <person name="Nakano K."/>
            <person name="Ninomiya N."/>
            <person name="Nishio T."/>
            <person name="Okada M."/>
            <person name="Plessy C."/>
            <person name="Shibata K."/>
            <person name="Shiraki T."/>
            <person name="Suzuki S."/>
            <person name="Tagami M."/>
            <person name="Waki K."/>
            <person name="Watahiki A."/>
            <person name="Okamura-Oho Y."/>
            <person name="Suzuki H."/>
            <person name="Kawai J."/>
            <person name="Hayashizaki Y."/>
        </authorList>
    </citation>
    <scope>NUCLEOTIDE SEQUENCE [LARGE SCALE MRNA]</scope>
    <source>
        <strain>C57BL/6J</strain>
        <tissue>Cerebellum</tissue>
        <tissue>Head</tissue>
        <tissue>Heart</tissue>
    </source>
</reference>
<reference key="2">
    <citation type="journal article" date="2004" name="Genome Res.">
        <title>The status, quality, and expansion of the NIH full-length cDNA project: the Mammalian Gene Collection (MGC).</title>
        <authorList>
            <consortium name="The MGC Project Team"/>
        </authorList>
    </citation>
    <scope>NUCLEOTIDE SEQUENCE [LARGE SCALE MRNA]</scope>
    <source>
        <tissue>Olfactory epithelium</tissue>
    </source>
</reference>
<reference key="3">
    <citation type="journal article" date="2010" name="Cell">
        <title>A tissue-specific atlas of mouse protein phosphorylation and expression.</title>
        <authorList>
            <person name="Huttlin E.L."/>
            <person name="Jedrychowski M.P."/>
            <person name="Elias J.E."/>
            <person name="Goswami T."/>
            <person name="Rad R."/>
            <person name="Beausoleil S.A."/>
            <person name="Villen J."/>
            <person name="Haas W."/>
            <person name="Sowa M.E."/>
            <person name="Gygi S.P."/>
        </authorList>
    </citation>
    <scope>PHOSPHORYLATION [LARGE SCALE ANALYSIS] AT THR-453</scope>
    <scope>IDENTIFICATION BY MASS SPECTROMETRY [LARGE SCALE ANALYSIS]</scope>
    <source>
        <tissue>Kidney</tissue>
    </source>
</reference>
<accession>Q8BH18</accession>
<accession>Q8C6X8</accession>
<evidence type="ECO:0000250" key="1">
    <source>
        <dbReference type="UniProtKB" id="Q9H0C3"/>
    </source>
</evidence>
<evidence type="ECO:0000255" key="2"/>
<evidence type="ECO:0000256" key="3">
    <source>
        <dbReference type="SAM" id="MobiDB-lite"/>
    </source>
</evidence>
<evidence type="ECO:0000305" key="4"/>
<evidence type="ECO:0007744" key="5">
    <source>
    </source>
</evidence>
<dbReference type="EMBL" id="AK047437">
    <property type="protein sequence ID" value="BAC33060.1"/>
    <property type="molecule type" value="mRNA"/>
</dbReference>
<dbReference type="EMBL" id="AK048597">
    <property type="protein sequence ID" value="BAC33384.1"/>
    <property type="molecule type" value="mRNA"/>
</dbReference>
<dbReference type="EMBL" id="AK052935">
    <property type="protein sequence ID" value="BAC35210.1"/>
    <property type="status" value="ALT_INIT"/>
    <property type="molecule type" value="mRNA"/>
</dbReference>
<dbReference type="EMBL" id="BC051178">
    <property type="protein sequence ID" value="AAH51178.1"/>
    <property type="molecule type" value="mRNA"/>
</dbReference>
<dbReference type="CCDS" id="CCDS27774.1"/>
<dbReference type="RefSeq" id="NP_848904.1">
    <property type="nucleotide sequence ID" value="NM_178789.4"/>
</dbReference>
<dbReference type="SMR" id="Q8BH18"/>
<dbReference type="BioGRID" id="236233">
    <property type="interactions" value="1"/>
</dbReference>
<dbReference type="FunCoup" id="Q8BH18">
    <property type="interactions" value="1172"/>
</dbReference>
<dbReference type="STRING" id="10090.ENSMUSP00000079038"/>
<dbReference type="GlyCosmos" id="Q8BH18">
    <property type="glycosylation" value="2 sites, No reported glycans"/>
</dbReference>
<dbReference type="GlyGen" id="Q8BH18">
    <property type="glycosylation" value="2 sites"/>
</dbReference>
<dbReference type="iPTMnet" id="Q8BH18"/>
<dbReference type="PhosphoSitePlus" id="Q8BH18"/>
<dbReference type="jPOST" id="Q8BH18"/>
<dbReference type="PaxDb" id="10090-ENSMUSP00000079038"/>
<dbReference type="ProteomicsDB" id="259522"/>
<dbReference type="Antibodypedia" id="25193">
    <property type="antibodies" value="91 antibodies from 17 providers"/>
</dbReference>
<dbReference type="DNASU" id="320709"/>
<dbReference type="Ensembl" id="ENSMUST00000080141.6">
    <property type="protein sequence ID" value="ENSMUSP00000079038.5"/>
    <property type="gene ID" value="ENSMUSG00000063296.6"/>
</dbReference>
<dbReference type="GeneID" id="320709"/>
<dbReference type="KEGG" id="mmu:320709"/>
<dbReference type="UCSC" id="uc007xjn.1">
    <property type="organism name" value="mouse"/>
</dbReference>
<dbReference type="AGR" id="MGI:2444580"/>
<dbReference type="CTD" id="84216"/>
<dbReference type="MGI" id="MGI:2444580">
    <property type="gene designation" value="Tmem117"/>
</dbReference>
<dbReference type="VEuPathDB" id="HostDB:ENSMUSG00000063296"/>
<dbReference type="eggNOG" id="ENOG502QXR1">
    <property type="taxonomic scope" value="Eukaryota"/>
</dbReference>
<dbReference type="GeneTree" id="ENSGT00390000013052"/>
<dbReference type="HOGENOM" id="CLU_047657_0_0_1"/>
<dbReference type="InParanoid" id="Q8BH18"/>
<dbReference type="OMA" id="QMIFKEE"/>
<dbReference type="OrthoDB" id="419441at2759"/>
<dbReference type="PhylomeDB" id="Q8BH18"/>
<dbReference type="TreeFam" id="TF336012"/>
<dbReference type="BioGRID-ORCS" id="320709">
    <property type="hits" value="1 hit in 75 CRISPR screens"/>
</dbReference>
<dbReference type="ChiTaRS" id="Tmem117">
    <property type="organism name" value="mouse"/>
</dbReference>
<dbReference type="PRO" id="PR:Q8BH18"/>
<dbReference type="Proteomes" id="UP000000589">
    <property type="component" value="Chromosome 15"/>
</dbReference>
<dbReference type="RNAct" id="Q8BH18">
    <property type="molecule type" value="protein"/>
</dbReference>
<dbReference type="Bgee" id="ENSMUSG00000063296">
    <property type="expression patterns" value="Expressed in otolith organ and 159 other cell types or tissues"/>
</dbReference>
<dbReference type="GO" id="GO:0005783">
    <property type="term" value="C:endoplasmic reticulum"/>
    <property type="evidence" value="ECO:0007669"/>
    <property type="project" value="Ensembl"/>
</dbReference>
<dbReference type="GO" id="GO:0005886">
    <property type="term" value="C:plasma membrane"/>
    <property type="evidence" value="ECO:0000250"/>
    <property type="project" value="UniProtKB"/>
</dbReference>
<dbReference type="GO" id="GO:0070059">
    <property type="term" value="P:intrinsic apoptotic signaling pathway in response to endoplasmic reticulum stress"/>
    <property type="evidence" value="ECO:0000250"/>
    <property type="project" value="UniProtKB"/>
</dbReference>
<dbReference type="InterPro" id="IPR029370">
    <property type="entry name" value="TMEM117"/>
</dbReference>
<dbReference type="PANTHER" id="PTHR31226">
    <property type="entry name" value="TRANSMEMBRANE PROTEIN 117"/>
    <property type="match status" value="1"/>
</dbReference>
<dbReference type="PANTHER" id="PTHR31226:SF1">
    <property type="entry name" value="TRANSMEMBRANE PROTEIN 117"/>
    <property type="match status" value="1"/>
</dbReference>
<dbReference type="Pfam" id="PF15113">
    <property type="entry name" value="TMEM117"/>
    <property type="match status" value="1"/>
</dbReference>
<protein>
    <recommendedName>
        <fullName>Transmembrane protein 117</fullName>
    </recommendedName>
</protein>
<organism>
    <name type="scientific">Mus musculus</name>
    <name type="common">Mouse</name>
    <dbReference type="NCBI Taxonomy" id="10090"/>
    <lineage>
        <taxon>Eukaryota</taxon>
        <taxon>Metazoa</taxon>
        <taxon>Chordata</taxon>
        <taxon>Craniata</taxon>
        <taxon>Vertebrata</taxon>
        <taxon>Euteleostomi</taxon>
        <taxon>Mammalia</taxon>
        <taxon>Eutheria</taxon>
        <taxon>Euarchontoglires</taxon>
        <taxon>Glires</taxon>
        <taxon>Rodentia</taxon>
        <taxon>Myomorpha</taxon>
        <taxon>Muroidea</taxon>
        <taxon>Muridae</taxon>
        <taxon>Murinae</taxon>
        <taxon>Mus</taxon>
        <taxon>Mus</taxon>
    </lineage>
</organism>
<sequence length="514" mass="60356">MGKDFRYYFQHPWSRMIVAYLVIFFNFLIFAEDPVSHSQTEANVIVVGNCFSFVTNKYPRGVGWRILKVLLWLLAILIGLIAGKFLFHQRLFGQLLRLKMFREDHGSWMTMFFSTILFLFIFSHIYNTILLMDGNMGAYLITDYMGIRNESFMKLAAVGTWMGDFVTAWMVTDMMLQDKPYPDWGKSARAFWKKGNVRIILFWTVLFTLTSVVVLVITTDWISWDKLNRGFLPSDEVSRAFLASFILVFDLLIVMQDWEFPHFMGDVDVNLPGLHTPHMQFKIPFFQKIFKEEYRIHITGKWFNYGIIFLVLILDLNMWKNQIFYKPHEYGQYIGPGQKIYTVKDSESLKDLNRTKLSWEWRSNHTNPQTNKTYVEGDMFLHSRFIGASLDVKCLAFVPSLIAFVWFGFFIWFFGRFLKNEQGMENQDKTYTRMKRKSPSEHSKDMGITRENTQVSVEDPLNDPALVCIRSDFNEIVYKSSHLTSENLSLHLKESTSEVEAEQEPAASQRMRTN</sequence>
<comment type="function">
    <text evidence="1">Involved in endoplasmic reticulum (ER) stress-induced cell death pathway.</text>
</comment>
<comment type="subcellular location">
    <subcellularLocation>
        <location evidence="1">Cell membrane</location>
        <topology evidence="2">Multi-pass membrane protein</topology>
    </subcellularLocation>
</comment>
<comment type="similarity">
    <text evidence="4">Belongs to the TMEM117 family.</text>
</comment>
<comment type="sequence caution" evidence="4">
    <conflict type="erroneous initiation">
        <sequence resource="EMBL-CDS" id="BAC35210"/>
    </conflict>
</comment>
<name>TM117_MOUSE</name>
<proteinExistence type="evidence at protein level"/>